<evidence type="ECO:0000250" key="1">
    <source>
        <dbReference type="UniProtKB" id="Q8K070"/>
    </source>
</evidence>
<evidence type="ECO:0000255" key="2"/>
<evidence type="ECO:0000255" key="3">
    <source>
        <dbReference type="PROSITE-ProRule" id="PRU00184"/>
    </source>
</evidence>
<evidence type="ECO:0000256" key="4">
    <source>
        <dbReference type="SAM" id="MobiDB-lite"/>
    </source>
</evidence>
<evidence type="ECO:0007744" key="5">
    <source>
    </source>
</evidence>
<sequence>MASSKLREPVDEVFDLDLAVPETTRLDSSLHKARAQLLVKGRRHRPSRSRLRDSTSSAEDGEGSDGPGGKVTDGCGSPLHRLRSPLHSGPGSPAGGSFCLEPPGLRRSLDEDEPPPSPLARYRPLHNAASHEGLAATSGSPPRSAPSSDSSPSFVRRYPRAEPHSEDDSRDASPPEPASPTIGLDKKTRRKFLDLGVTLRRASTSKSRKEKGSNRLSMGSRESVEGSGRTGGSPFLPFSWFTDSGKGSASSGSTTSPTCSPKHEGFSPKKSASQESTLSDDSTPPSSSPKIPGDPRQETKCSYPYHTLSQSSDEFLDESLPAVEHWTSQQVGQWLHSLNLEQYAAEFAARQVDGPQLLQLDGSKLKSLGLSNSHDRALVKRKLKELAAAAEKERKAQEKTARQREKLRRREHEAKKS</sequence>
<protein>
    <recommendedName>
        <fullName>Sterile alpha motif domain-containing protein 14</fullName>
        <shortName>SAM domain-containing protein 14</shortName>
    </recommendedName>
</protein>
<keyword id="KW-0175">Coiled coil</keyword>
<keyword id="KW-0597">Phosphoprotein</keyword>
<keyword id="KW-1185">Reference proteome</keyword>
<feature type="chain" id="PRO_0000250565" description="Sterile alpha motif domain-containing protein 14">
    <location>
        <begin position="1"/>
        <end position="417"/>
    </location>
</feature>
<feature type="domain" description="SAM" evidence="3">
    <location>
        <begin position="326"/>
        <end position="389"/>
    </location>
</feature>
<feature type="region of interest" description="Disordered" evidence="4">
    <location>
        <begin position="37"/>
        <end position="306"/>
    </location>
</feature>
<feature type="region of interest" description="Disordered" evidence="4">
    <location>
        <begin position="390"/>
        <end position="417"/>
    </location>
</feature>
<feature type="coiled-coil region" evidence="2">
    <location>
        <begin position="375"/>
        <end position="416"/>
    </location>
</feature>
<feature type="compositionally biased region" description="Basic residues" evidence="4">
    <location>
        <begin position="40"/>
        <end position="49"/>
    </location>
</feature>
<feature type="compositionally biased region" description="Low complexity" evidence="4">
    <location>
        <begin position="138"/>
        <end position="153"/>
    </location>
</feature>
<feature type="compositionally biased region" description="Basic and acidic residues" evidence="4">
    <location>
        <begin position="159"/>
        <end position="173"/>
    </location>
</feature>
<feature type="compositionally biased region" description="Low complexity" evidence="4">
    <location>
        <begin position="244"/>
        <end position="260"/>
    </location>
</feature>
<feature type="compositionally biased region" description="Low complexity" evidence="4">
    <location>
        <begin position="276"/>
        <end position="289"/>
    </location>
</feature>
<feature type="modified residue" description="Phosphoserine" evidence="1">
    <location>
        <position position="84"/>
    </location>
</feature>
<feature type="modified residue" description="Phosphoserine" evidence="5">
    <location>
        <position position="108"/>
    </location>
</feature>
<feature type="modified residue" description="Phosphoserine" evidence="5">
    <location>
        <position position="173"/>
    </location>
</feature>
<feature type="modified residue" description="Phosphoserine" evidence="5">
    <location>
        <position position="179"/>
    </location>
</feature>
<feature type="modified residue" description="Phosphoserine" evidence="1">
    <location>
        <position position="279"/>
    </location>
</feature>
<feature type="modified residue" description="Phosphothreonine" evidence="1">
    <location>
        <position position="283"/>
    </location>
</feature>
<reference key="1">
    <citation type="journal article" date="2004" name="Genome Res.">
        <title>The status, quality, and expansion of the NIH full-length cDNA project: the Mammalian Gene Collection (MGC).</title>
        <authorList>
            <consortium name="The MGC Project Team"/>
        </authorList>
    </citation>
    <scope>NUCLEOTIDE SEQUENCE [LARGE SCALE MRNA]</scope>
    <source>
        <tissue>Brain</tissue>
    </source>
</reference>
<reference key="2">
    <citation type="journal article" date="2012" name="Nat. Commun.">
        <title>Quantitative maps of protein phosphorylation sites across 14 different rat organs and tissues.</title>
        <authorList>
            <person name="Lundby A."/>
            <person name="Secher A."/>
            <person name="Lage K."/>
            <person name="Nordsborg N.B."/>
            <person name="Dmytriyev A."/>
            <person name="Lundby C."/>
            <person name="Olsen J.V."/>
        </authorList>
    </citation>
    <scope>PHOSPHORYLATION [LARGE SCALE ANALYSIS] AT SER-108; SER-173 AND SER-179</scope>
    <scope>IDENTIFICATION BY MASS SPECTROMETRY [LARGE SCALE ANALYSIS]</scope>
</reference>
<proteinExistence type="evidence at protein level"/>
<organism>
    <name type="scientific">Rattus norvegicus</name>
    <name type="common">Rat</name>
    <dbReference type="NCBI Taxonomy" id="10116"/>
    <lineage>
        <taxon>Eukaryota</taxon>
        <taxon>Metazoa</taxon>
        <taxon>Chordata</taxon>
        <taxon>Craniata</taxon>
        <taxon>Vertebrata</taxon>
        <taxon>Euteleostomi</taxon>
        <taxon>Mammalia</taxon>
        <taxon>Eutheria</taxon>
        <taxon>Euarchontoglires</taxon>
        <taxon>Glires</taxon>
        <taxon>Rodentia</taxon>
        <taxon>Myomorpha</taxon>
        <taxon>Muroidea</taxon>
        <taxon>Muridae</taxon>
        <taxon>Murinae</taxon>
        <taxon>Rattus</taxon>
    </lineage>
</organism>
<dbReference type="EMBL" id="BC091329">
    <property type="protein sequence ID" value="AAH91329.1"/>
    <property type="molecule type" value="mRNA"/>
</dbReference>
<dbReference type="RefSeq" id="NP_001020137.1">
    <property type="nucleotide sequence ID" value="NM_001024966.1"/>
</dbReference>
<dbReference type="SMR" id="Q5BJU3"/>
<dbReference type="BioGRID" id="252269">
    <property type="interactions" value="1"/>
</dbReference>
<dbReference type="FunCoup" id="Q5BJU3">
    <property type="interactions" value="1332"/>
</dbReference>
<dbReference type="STRING" id="10116.ENSRNOP00000005519"/>
<dbReference type="iPTMnet" id="Q5BJU3"/>
<dbReference type="PhosphoSitePlus" id="Q5BJU3"/>
<dbReference type="PaxDb" id="10116-ENSRNOP00000005519"/>
<dbReference type="GeneID" id="287637"/>
<dbReference type="KEGG" id="rno:287637"/>
<dbReference type="UCSC" id="RGD:1306138">
    <property type="organism name" value="rat"/>
</dbReference>
<dbReference type="AGR" id="RGD:1306138"/>
<dbReference type="CTD" id="201191"/>
<dbReference type="RGD" id="1306138">
    <property type="gene designation" value="Samd14"/>
</dbReference>
<dbReference type="eggNOG" id="KOG1945">
    <property type="taxonomic scope" value="Eukaryota"/>
</dbReference>
<dbReference type="InParanoid" id="Q5BJU3"/>
<dbReference type="PhylomeDB" id="Q5BJU3"/>
<dbReference type="PRO" id="PR:Q5BJU3"/>
<dbReference type="Proteomes" id="UP000002494">
    <property type="component" value="Unplaced"/>
</dbReference>
<dbReference type="GO" id="GO:0015629">
    <property type="term" value="C:actin cytoskeleton"/>
    <property type="evidence" value="ECO:0000318"/>
    <property type="project" value="GO_Central"/>
</dbReference>
<dbReference type="GO" id="GO:0005737">
    <property type="term" value="C:cytoplasm"/>
    <property type="evidence" value="ECO:0000318"/>
    <property type="project" value="GO_Central"/>
</dbReference>
<dbReference type="GO" id="GO:0030425">
    <property type="term" value="C:dendrite"/>
    <property type="evidence" value="ECO:0000318"/>
    <property type="project" value="GO_Central"/>
</dbReference>
<dbReference type="GO" id="GO:0014069">
    <property type="term" value="C:postsynaptic density"/>
    <property type="evidence" value="ECO:0000318"/>
    <property type="project" value="GO_Central"/>
</dbReference>
<dbReference type="GO" id="GO:0051015">
    <property type="term" value="F:actin filament binding"/>
    <property type="evidence" value="ECO:0000318"/>
    <property type="project" value="GO_Central"/>
</dbReference>
<dbReference type="GO" id="GO:0007015">
    <property type="term" value="P:actin filament organization"/>
    <property type="evidence" value="ECO:0000318"/>
    <property type="project" value="GO_Central"/>
</dbReference>
<dbReference type="GO" id="GO:0019722">
    <property type="term" value="P:calcium-mediated signaling"/>
    <property type="evidence" value="ECO:0000318"/>
    <property type="project" value="GO_Central"/>
</dbReference>
<dbReference type="GO" id="GO:0031175">
    <property type="term" value="P:neuron projection development"/>
    <property type="evidence" value="ECO:0000318"/>
    <property type="project" value="GO_Central"/>
</dbReference>
<dbReference type="CDD" id="cd09512">
    <property type="entry name" value="SAM_Neurabin-like"/>
    <property type="match status" value="1"/>
</dbReference>
<dbReference type="FunFam" id="1.10.150.50:FF:000008">
    <property type="entry name" value="Neurabin-1 isoform 1-like protein"/>
    <property type="match status" value="1"/>
</dbReference>
<dbReference type="Gene3D" id="1.10.150.50">
    <property type="entry name" value="Transcription Factor, Ets-1"/>
    <property type="match status" value="1"/>
</dbReference>
<dbReference type="InterPro" id="IPR043446">
    <property type="entry name" value="Neurabin-like"/>
</dbReference>
<dbReference type="InterPro" id="IPR001660">
    <property type="entry name" value="SAM"/>
</dbReference>
<dbReference type="InterPro" id="IPR013761">
    <property type="entry name" value="SAM/pointed_sf"/>
</dbReference>
<dbReference type="PANTHER" id="PTHR16154">
    <property type="entry name" value="NEURABIN"/>
    <property type="match status" value="1"/>
</dbReference>
<dbReference type="PANTHER" id="PTHR16154:SF28">
    <property type="entry name" value="STERILE ALPHA MOTIF DOMAIN-CONTAINING PROTEIN 14"/>
    <property type="match status" value="1"/>
</dbReference>
<dbReference type="Pfam" id="PF07647">
    <property type="entry name" value="SAM_2"/>
    <property type="match status" value="1"/>
</dbReference>
<dbReference type="SMART" id="SM00454">
    <property type="entry name" value="SAM"/>
    <property type="match status" value="1"/>
</dbReference>
<dbReference type="SUPFAM" id="SSF47769">
    <property type="entry name" value="SAM/Pointed domain"/>
    <property type="match status" value="1"/>
</dbReference>
<dbReference type="PROSITE" id="PS50105">
    <property type="entry name" value="SAM_DOMAIN"/>
    <property type="match status" value="1"/>
</dbReference>
<accession>Q5BJU3</accession>
<gene>
    <name type="primary">Samd14</name>
</gene>
<name>SAM14_RAT</name>